<gene>
    <name evidence="2" type="primary">infB</name>
    <name type="ordered locus">RoseRS_3751</name>
</gene>
<reference key="1">
    <citation type="submission" date="2007-04" db="EMBL/GenBank/DDBJ databases">
        <title>Complete sequence of Roseiflexus sp. RS-1.</title>
        <authorList>
            <consortium name="US DOE Joint Genome Institute"/>
            <person name="Copeland A."/>
            <person name="Lucas S."/>
            <person name="Lapidus A."/>
            <person name="Barry K."/>
            <person name="Detter J.C."/>
            <person name="Glavina del Rio T."/>
            <person name="Hammon N."/>
            <person name="Israni S."/>
            <person name="Dalin E."/>
            <person name="Tice H."/>
            <person name="Pitluck S."/>
            <person name="Chertkov O."/>
            <person name="Brettin T."/>
            <person name="Bruce D."/>
            <person name="Han C."/>
            <person name="Schmutz J."/>
            <person name="Larimer F."/>
            <person name="Land M."/>
            <person name="Hauser L."/>
            <person name="Kyrpides N."/>
            <person name="Mikhailova N."/>
            <person name="Bryant D.A."/>
            <person name="Richardson P."/>
        </authorList>
    </citation>
    <scope>NUCLEOTIDE SEQUENCE [LARGE SCALE GENOMIC DNA]</scope>
    <source>
        <strain>RS-1</strain>
    </source>
</reference>
<proteinExistence type="inferred from homology"/>
<keyword id="KW-0963">Cytoplasm</keyword>
<keyword id="KW-0342">GTP-binding</keyword>
<keyword id="KW-0396">Initiation factor</keyword>
<keyword id="KW-0547">Nucleotide-binding</keyword>
<keyword id="KW-0648">Protein biosynthesis</keyword>
<accession>A5UZQ2</accession>
<organism>
    <name type="scientific">Roseiflexus sp. (strain RS-1)</name>
    <dbReference type="NCBI Taxonomy" id="357808"/>
    <lineage>
        <taxon>Bacteria</taxon>
        <taxon>Bacillati</taxon>
        <taxon>Chloroflexota</taxon>
        <taxon>Chloroflexia</taxon>
        <taxon>Chloroflexales</taxon>
        <taxon>Roseiflexineae</taxon>
        <taxon>Roseiflexaceae</taxon>
        <taxon>Roseiflexus</taxon>
    </lineage>
</organism>
<name>IF2_ROSS1</name>
<comment type="function">
    <text evidence="2">One of the essential components for the initiation of protein synthesis. Protects formylmethionyl-tRNA from spontaneous hydrolysis and promotes its binding to the 30S ribosomal subunits. Also involved in the hydrolysis of GTP during the formation of the 70S ribosomal complex.</text>
</comment>
<comment type="subcellular location">
    <subcellularLocation>
        <location evidence="2">Cytoplasm</location>
    </subcellularLocation>
</comment>
<comment type="similarity">
    <text evidence="2">Belongs to the TRAFAC class translation factor GTPase superfamily. Classic translation factor GTPase family. IF-2 subfamily.</text>
</comment>
<evidence type="ECO:0000250" key="1"/>
<evidence type="ECO:0000255" key="2">
    <source>
        <dbReference type="HAMAP-Rule" id="MF_00100"/>
    </source>
</evidence>
<evidence type="ECO:0000256" key="3">
    <source>
        <dbReference type="SAM" id="MobiDB-lite"/>
    </source>
</evidence>
<sequence>MSDMQISGYQSAINARHYIQFAGGGRGPGNPGGGRGPGNPGGGRGPGSPGGGRGPGSPGGGRGPGSPGGGRGPGNPGGGRGPGGGRGGGRGGDGRRRDESFVENEGGRGNRSGRTTSTATTARTPGGLARPTTTVRAPVRPKGPIALPVTMTVREFSEATGVGASEILKALLKAGVVANINQQIDYETAAVIAADFGIETVEYVPPQLEGVVENIRDVLAAQDPKDMKPRPPVVTIMGHVDHGKTKLLDAIRSTRVAESEAGGITQHIGAYQVELHGRKITFLDTPGHEAFTAMRARGAQVTDIVVLVVAADDGVMPQTLEAISHVKAAGVPMIVAINKIDAPNANPDRVRQQLANAGVIVEQFGGDVPSVEVSAKLKKNIDGLLEIILLVADLNEYKANPNAPAVGTIIEAEMDRTRGPVATVLVQNGTLRLEDNVLVGSTTGTIRTMFNDAGKRLRFAEPATPVVILGLHDVPQAGDILQVMPDLAVAREIALQRQRKQRLEAMATSRGVSLDGLFSSIQQGKIKELNIILKADVQGSIGAIEHALSQLNTDEVQIRIIHRGTGTITESDVNLAIASHAIIIGFNARPDPAARRQAEQYGVDIRFYNIIYQLTEDIKKAMIGMLEPEYREVTEGFAEVRNTFRLPTREIVAGLYVTEGKISRQYNVRVLRNGVVLHDGKIASLKRFKDDVREVQAGYECGLIVEGFNDITPGDTMEFYRRERVERTV</sequence>
<protein>
    <recommendedName>
        <fullName evidence="2">Translation initiation factor IF-2</fullName>
    </recommendedName>
</protein>
<feature type="chain" id="PRO_0000335505" description="Translation initiation factor IF-2">
    <location>
        <begin position="1"/>
        <end position="729"/>
    </location>
</feature>
<feature type="domain" description="tr-type G">
    <location>
        <begin position="229"/>
        <end position="396"/>
    </location>
</feature>
<feature type="region of interest" description="Disordered" evidence="3">
    <location>
        <begin position="20"/>
        <end position="141"/>
    </location>
</feature>
<feature type="region of interest" description="G1" evidence="1">
    <location>
        <begin position="238"/>
        <end position="245"/>
    </location>
</feature>
<feature type="region of interest" description="G2" evidence="1">
    <location>
        <begin position="263"/>
        <end position="267"/>
    </location>
</feature>
<feature type="region of interest" description="G3" evidence="1">
    <location>
        <begin position="284"/>
        <end position="287"/>
    </location>
</feature>
<feature type="region of interest" description="G4" evidence="1">
    <location>
        <begin position="338"/>
        <end position="341"/>
    </location>
</feature>
<feature type="region of interest" description="G5" evidence="1">
    <location>
        <begin position="374"/>
        <end position="376"/>
    </location>
</feature>
<feature type="compositionally biased region" description="Gly residues" evidence="3">
    <location>
        <begin position="22"/>
        <end position="91"/>
    </location>
</feature>
<feature type="compositionally biased region" description="Basic and acidic residues" evidence="3">
    <location>
        <begin position="92"/>
        <end position="108"/>
    </location>
</feature>
<feature type="compositionally biased region" description="Low complexity" evidence="3">
    <location>
        <begin position="112"/>
        <end position="127"/>
    </location>
</feature>
<feature type="binding site" evidence="2">
    <location>
        <begin position="238"/>
        <end position="245"/>
    </location>
    <ligand>
        <name>GTP</name>
        <dbReference type="ChEBI" id="CHEBI:37565"/>
    </ligand>
</feature>
<feature type="binding site" evidence="2">
    <location>
        <begin position="284"/>
        <end position="288"/>
    </location>
    <ligand>
        <name>GTP</name>
        <dbReference type="ChEBI" id="CHEBI:37565"/>
    </ligand>
</feature>
<feature type="binding site" evidence="2">
    <location>
        <begin position="338"/>
        <end position="341"/>
    </location>
    <ligand>
        <name>GTP</name>
        <dbReference type="ChEBI" id="CHEBI:37565"/>
    </ligand>
</feature>
<dbReference type="EMBL" id="CP000686">
    <property type="protein sequence ID" value="ABQ92105.1"/>
    <property type="molecule type" value="Genomic_DNA"/>
</dbReference>
<dbReference type="RefSeq" id="WP_011958447.1">
    <property type="nucleotide sequence ID" value="NC_009523.1"/>
</dbReference>
<dbReference type="SMR" id="A5UZQ2"/>
<dbReference type="STRING" id="357808.RoseRS_3751"/>
<dbReference type="KEGG" id="rrs:RoseRS_3751"/>
<dbReference type="eggNOG" id="COG0532">
    <property type="taxonomic scope" value="Bacteria"/>
</dbReference>
<dbReference type="HOGENOM" id="CLU_006301_5_2_0"/>
<dbReference type="OrthoDB" id="9811804at2"/>
<dbReference type="Proteomes" id="UP000006554">
    <property type="component" value="Chromosome"/>
</dbReference>
<dbReference type="GO" id="GO:0005829">
    <property type="term" value="C:cytosol"/>
    <property type="evidence" value="ECO:0007669"/>
    <property type="project" value="TreeGrafter"/>
</dbReference>
<dbReference type="GO" id="GO:0005525">
    <property type="term" value="F:GTP binding"/>
    <property type="evidence" value="ECO:0007669"/>
    <property type="project" value="UniProtKB-KW"/>
</dbReference>
<dbReference type="GO" id="GO:0003924">
    <property type="term" value="F:GTPase activity"/>
    <property type="evidence" value="ECO:0007669"/>
    <property type="project" value="UniProtKB-UniRule"/>
</dbReference>
<dbReference type="GO" id="GO:0003743">
    <property type="term" value="F:translation initiation factor activity"/>
    <property type="evidence" value="ECO:0007669"/>
    <property type="project" value="UniProtKB-UniRule"/>
</dbReference>
<dbReference type="CDD" id="cd01887">
    <property type="entry name" value="IF2_eIF5B"/>
    <property type="match status" value="1"/>
</dbReference>
<dbReference type="CDD" id="cd03702">
    <property type="entry name" value="IF2_mtIF2_II"/>
    <property type="match status" value="1"/>
</dbReference>
<dbReference type="CDD" id="cd03692">
    <property type="entry name" value="mtIF2_IVc"/>
    <property type="match status" value="1"/>
</dbReference>
<dbReference type="FunFam" id="2.40.30.10:FF:000008">
    <property type="entry name" value="Translation initiation factor IF-2"/>
    <property type="match status" value="1"/>
</dbReference>
<dbReference type="FunFam" id="2.40.30.10:FF:000054">
    <property type="entry name" value="Translation initiation factor IF-2"/>
    <property type="match status" value="1"/>
</dbReference>
<dbReference type="FunFam" id="3.40.50.10050:FF:000001">
    <property type="entry name" value="Translation initiation factor IF-2"/>
    <property type="match status" value="1"/>
</dbReference>
<dbReference type="FunFam" id="3.40.50.300:FF:000019">
    <property type="entry name" value="Translation initiation factor IF-2"/>
    <property type="match status" value="1"/>
</dbReference>
<dbReference type="Gene3D" id="3.40.50.300">
    <property type="entry name" value="P-loop containing nucleotide triphosphate hydrolases"/>
    <property type="match status" value="1"/>
</dbReference>
<dbReference type="Gene3D" id="2.40.30.10">
    <property type="entry name" value="Translation factors"/>
    <property type="match status" value="2"/>
</dbReference>
<dbReference type="Gene3D" id="3.40.50.10050">
    <property type="entry name" value="Translation initiation factor IF- 2, domain 3"/>
    <property type="match status" value="1"/>
</dbReference>
<dbReference type="HAMAP" id="MF_00100_B">
    <property type="entry name" value="IF_2_B"/>
    <property type="match status" value="1"/>
</dbReference>
<dbReference type="InterPro" id="IPR053905">
    <property type="entry name" value="EF-G-like_DII"/>
</dbReference>
<dbReference type="InterPro" id="IPR004161">
    <property type="entry name" value="EFTu-like_2"/>
</dbReference>
<dbReference type="InterPro" id="IPR044145">
    <property type="entry name" value="IF2_II"/>
</dbReference>
<dbReference type="InterPro" id="IPR006847">
    <property type="entry name" value="IF2_N"/>
</dbReference>
<dbReference type="InterPro" id="IPR027417">
    <property type="entry name" value="P-loop_NTPase"/>
</dbReference>
<dbReference type="InterPro" id="IPR005225">
    <property type="entry name" value="Small_GTP-bd"/>
</dbReference>
<dbReference type="InterPro" id="IPR000795">
    <property type="entry name" value="T_Tr_GTP-bd_dom"/>
</dbReference>
<dbReference type="InterPro" id="IPR000178">
    <property type="entry name" value="TF_IF2_bacterial-like"/>
</dbReference>
<dbReference type="InterPro" id="IPR015760">
    <property type="entry name" value="TIF_IF2"/>
</dbReference>
<dbReference type="InterPro" id="IPR023115">
    <property type="entry name" value="TIF_IF2_dom3"/>
</dbReference>
<dbReference type="InterPro" id="IPR036925">
    <property type="entry name" value="TIF_IF2_dom3_sf"/>
</dbReference>
<dbReference type="InterPro" id="IPR009000">
    <property type="entry name" value="Transl_B-barrel_sf"/>
</dbReference>
<dbReference type="NCBIfam" id="TIGR00487">
    <property type="entry name" value="IF-2"/>
    <property type="match status" value="1"/>
</dbReference>
<dbReference type="NCBIfam" id="TIGR00231">
    <property type="entry name" value="small_GTP"/>
    <property type="match status" value="1"/>
</dbReference>
<dbReference type="PANTHER" id="PTHR43381:SF5">
    <property type="entry name" value="TR-TYPE G DOMAIN-CONTAINING PROTEIN"/>
    <property type="match status" value="1"/>
</dbReference>
<dbReference type="PANTHER" id="PTHR43381">
    <property type="entry name" value="TRANSLATION INITIATION FACTOR IF-2-RELATED"/>
    <property type="match status" value="1"/>
</dbReference>
<dbReference type="Pfam" id="PF22042">
    <property type="entry name" value="EF-G_D2"/>
    <property type="match status" value="1"/>
</dbReference>
<dbReference type="Pfam" id="PF00009">
    <property type="entry name" value="GTP_EFTU"/>
    <property type="match status" value="1"/>
</dbReference>
<dbReference type="Pfam" id="PF03144">
    <property type="entry name" value="GTP_EFTU_D2"/>
    <property type="match status" value="1"/>
</dbReference>
<dbReference type="Pfam" id="PF11987">
    <property type="entry name" value="IF-2"/>
    <property type="match status" value="1"/>
</dbReference>
<dbReference type="Pfam" id="PF04760">
    <property type="entry name" value="IF2_N"/>
    <property type="match status" value="1"/>
</dbReference>
<dbReference type="SUPFAM" id="SSF52156">
    <property type="entry name" value="Initiation factor IF2/eIF5b, domain 3"/>
    <property type="match status" value="1"/>
</dbReference>
<dbReference type="SUPFAM" id="SSF52540">
    <property type="entry name" value="P-loop containing nucleoside triphosphate hydrolases"/>
    <property type="match status" value="1"/>
</dbReference>
<dbReference type="SUPFAM" id="SSF50447">
    <property type="entry name" value="Translation proteins"/>
    <property type="match status" value="2"/>
</dbReference>
<dbReference type="PROSITE" id="PS51722">
    <property type="entry name" value="G_TR_2"/>
    <property type="match status" value="1"/>
</dbReference>
<dbReference type="PROSITE" id="PS01176">
    <property type="entry name" value="IF2"/>
    <property type="match status" value="1"/>
</dbReference>